<organism>
    <name type="scientific">Bacillus anthracis</name>
    <dbReference type="NCBI Taxonomy" id="1392"/>
    <lineage>
        <taxon>Bacteria</taxon>
        <taxon>Bacillati</taxon>
        <taxon>Bacillota</taxon>
        <taxon>Bacilli</taxon>
        <taxon>Bacillales</taxon>
        <taxon>Bacillaceae</taxon>
        <taxon>Bacillus</taxon>
        <taxon>Bacillus cereus group</taxon>
    </lineage>
</organism>
<comment type="function">
    <text evidence="1">Catalyzes the phosphorylation of the position 2 hydroxy group of 4-diphosphocytidyl-2C-methyl-D-erythritol.</text>
</comment>
<comment type="catalytic activity">
    <reaction evidence="1">
        <text>4-CDP-2-C-methyl-D-erythritol + ATP = 4-CDP-2-C-methyl-D-erythritol 2-phosphate + ADP + H(+)</text>
        <dbReference type="Rhea" id="RHEA:18437"/>
        <dbReference type="ChEBI" id="CHEBI:15378"/>
        <dbReference type="ChEBI" id="CHEBI:30616"/>
        <dbReference type="ChEBI" id="CHEBI:57823"/>
        <dbReference type="ChEBI" id="CHEBI:57919"/>
        <dbReference type="ChEBI" id="CHEBI:456216"/>
        <dbReference type="EC" id="2.7.1.148"/>
    </reaction>
</comment>
<comment type="pathway">
    <text evidence="1">Isoprenoid biosynthesis; isopentenyl diphosphate biosynthesis via DXP pathway; isopentenyl diphosphate from 1-deoxy-D-xylulose 5-phosphate: step 3/6.</text>
</comment>
<comment type="similarity">
    <text evidence="1">Belongs to the GHMP kinase family. IspE subfamily.</text>
</comment>
<comment type="sequence caution" evidence="2">
    <conflict type="erroneous initiation">
        <sequence resource="EMBL-CDS" id="AAT52382"/>
    </conflict>
</comment>
<accession>Q81VZ6</accession>
<accession>Q6I4Z9</accession>
<accession>Q6KYP3</accession>
<gene>
    <name evidence="1" type="primary">ispE</name>
    <name type="ordered locus">BA_0043</name>
    <name type="ordered locus">GBAA_0043</name>
    <name type="ordered locus">BAS0044</name>
</gene>
<name>ISPE_BACAN</name>
<feature type="chain" id="PRO_0000189184" description="4-diphosphocytidyl-2-C-methyl-D-erythritol kinase">
    <location>
        <begin position="1"/>
        <end position="289"/>
    </location>
</feature>
<feature type="active site" evidence="1">
    <location>
        <position position="10"/>
    </location>
</feature>
<feature type="active site" evidence="1">
    <location>
        <position position="136"/>
    </location>
</feature>
<feature type="binding site" evidence="1">
    <location>
        <begin position="94"/>
        <end position="104"/>
    </location>
    <ligand>
        <name>ATP</name>
        <dbReference type="ChEBI" id="CHEBI:30616"/>
    </ligand>
</feature>
<proteinExistence type="inferred from homology"/>
<keyword id="KW-0067">ATP-binding</keyword>
<keyword id="KW-0414">Isoprene biosynthesis</keyword>
<keyword id="KW-0418">Kinase</keyword>
<keyword id="KW-0547">Nucleotide-binding</keyword>
<keyword id="KW-1185">Reference proteome</keyword>
<keyword id="KW-0808">Transferase</keyword>
<sequence>MKLLVKAPAKINLSLDVLGKRQDGYHEVKMIMTTIDLADRLELMELAEDRIEILSHNRYVPDDQRNLAYQAAKLLKEKFNVKKGVSITIEKTIPVAAGLAGGSSDAAATLRGLNKLWNLGLTIDQLAELGAEIGSDVSFCVYGGTAIATGRGEQIEHIKTPPSCWVILAKPHIGVFTADVYGNLKLNRVTHPNVDKMVDVINAGDYKGICDTVGNVLEDVTFAMHPEVARIKAQMKRFGADAVLMSGSGPTVFGLVHHDSRMHRIYNGLKGFCEQVYAVRLLGERETLE</sequence>
<dbReference type="EC" id="2.7.1.148" evidence="1"/>
<dbReference type="EMBL" id="AE016879">
    <property type="protein sequence ID" value="AAP24098.1"/>
    <property type="molecule type" value="Genomic_DNA"/>
</dbReference>
<dbReference type="EMBL" id="AE017334">
    <property type="protein sequence ID" value="AAT29122.2"/>
    <property type="molecule type" value="Genomic_DNA"/>
</dbReference>
<dbReference type="EMBL" id="AE017225">
    <property type="protein sequence ID" value="AAT52382.1"/>
    <property type="status" value="ALT_INIT"/>
    <property type="molecule type" value="Genomic_DNA"/>
</dbReference>
<dbReference type="RefSeq" id="NP_842612.1">
    <property type="nucleotide sequence ID" value="NC_003997.3"/>
</dbReference>
<dbReference type="RefSeq" id="WP_000772091.1">
    <property type="nucleotide sequence ID" value="NZ_WXXJ01000001.1"/>
</dbReference>
<dbReference type="SMR" id="Q81VZ6"/>
<dbReference type="STRING" id="261594.GBAA_0043"/>
<dbReference type="DNASU" id="1088040"/>
<dbReference type="GeneID" id="45020085"/>
<dbReference type="KEGG" id="ban:BA_0043"/>
<dbReference type="KEGG" id="bar:GBAA_0043"/>
<dbReference type="KEGG" id="bat:BAS0044"/>
<dbReference type="PATRIC" id="fig|1392.232.peg.229"/>
<dbReference type="eggNOG" id="COG1947">
    <property type="taxonomic scope" value="Bacteria"/>
</dbReference>
<dbReference type="HOGENOM" id="CLU_053057_1_1_9"/>
<dbReference type="OMA" id="RWPSPAK"/>
<dbReference type="OrthoDB" id="9809438at2"/>
<dbReference type="UniPathway" id="UPA00056">
    <property type="reaction ID" value="UER00094"/>
</dbReference>
<dbReference type="Proteomes" id="UP000000427">
    <property type="component" value="Chromosome"/>
</dbReference>
<dbReference type="Proteomes" id="UP000000594">
    <property type="component" value="Chromosome"/>
</dbReference>
<dbReference type="GO" id="GO:0050515">
    <property type="term" value="F:4-(cytidine 5'-diphospho)-2-C-methyl-D-erythritol kinase activity"/>
    <property type="evidence" value="ECO:0007669"/>
    <property type="project" value="UniProtKB-UniRule"/>
</dbReference>
<dbReference type="GO" id="GO:0005524">
    <property type="term" value="F:ATP binding"/>
    <property type="evidence" value="ECO:0007669"/>
    <property type="project" value="UniProtKB-UniRule"/>
</dbReference>
<dbReference type="GO" id="GO:0019288">
    <property type="term" value="P:isopentenyl diphosphate biosynthetic process, methylerythritol 4-phosphate pathway"/>
    <property type="evidence" value="ECO:0007669"/>
    <property type="project" value="UniProtKB-UniRule"/>
</dbReference>
<dbReference type="GO" id="GO:0016114">
    <property type="term" value="P:terpenoid biosynthetic process"/>
    <property type="evidence" value="ECO:0007669"/>
    <property type="project" value="InterPro"/>
</dbReference>
<dbReference type="FunFam" id="3.30.230.10:FF:000029">
    <property type="entry name" value="4-diphosphocytidyl-2-C-methyl-D-erythritol kinase"/>
    <property type="match status" value="1"/>
</dbReference>
<dbReference type="FunFam" id="3.30.70.890:FF:000006">
    <property type="entry name" value="4-diphosphocytidyl-2-C-methyl-D-erythritol kinase"/>
    <property type="match status" value="1"/>
</dbReference>
<dbReference type="Gene3D" id="3.30.230.10">
    <property type="match status" value="1"/>
</dbReference>
<dbReference type="Gene3D" id="3.30.70.890">
    <property type="entry name" value="GHMP kinase, C-terminal domain"/>
    <property type="match status" value="1"/>
</dbReference>
<dbReference type="HAMAP" id="MF_00061">
    <property type="entry name" value="IspE"/>
    <property type="match status" value="1"/>
</dbReference>
<dbReference type="InterPro" id="IPR013750">
    <property type="entry name" value="GHMP_kinase_C_dom"/>
</dbReference>
<dbReference type="InterPro" id="IPR036554">
    <property type="entry name" value="GHMP_kinase_C_sf"/>
</dbReference>
<dbReference type="InterPro" id="IPR006204">
    <property type="entry name" value="GHMP_kinase_N_dom"/>
</dbReference>
<dbReference type="InterPro" id="IPR004424">
    <property type="entry name" value="IspE"/>
</dbReference>
<dbReference type="InterPro" id="IPR020568">
    <property type="entry name" value="Ribosomal_Su5_D2-typ_SF"/>
</dbReference>
<dbReference type="InterPro" id="IPR014721">
    <property type="entry name" value="Ribsml_uS5_D2-typ_fold_subgr"/>
</dbReference>
<dbReference type="NCBIfam" id="TIGR00154">
    <property type="entry name" value="ispE"/>
    <property type="match status" value="1"/>
</dbReference>
<dbReference type="NCBIfam" id="NF011202">
    <property type="entry name" value="PRK14608.1"/>
    <property type="match status" value="1"/>
</dbReference>
<dbReference type="PANTHER" id="PTHR43527">
    <property type="entry name" value="4-DIPHOSPHOCYTIDYL-2-C-METHYL-D-ERYTHRITOL KINASE, CHLOROPLASTIC"/>
    <property type="match status" value="1"/>
</dbReference>
<dbReference type="PANTHER" id="PTHR43527:SF2">
    <property type="entry name" value="4-DIPHOSPHOCYTIDYL-2-C-METHYL-D-ERYTHRITOL KINASE, CHLOROPLASTIC"/>
    <property type="match status" value="1"/>
</dbReference>
<dbReference type="Pfam" id="PF08544">
    <property type="entry name" value="GHMP_kinases_C"/>
    <property type="match status" value="1"/>
</dbReference>
<dbReference type="Pfam" id="PF00288">
    <property type="entry name" value="GHMP_kinases_N"/>
    <property type="match status" value="1"/>
</dbReference>
<dbReference type="PIRSF" id="PIRSF010376">
    <property type="entry name" value="IspE"/>
    <property type="match status" value="1"/>
</dbReference>
<dbReference type="SUPFAM" id="SSF55060">
    <property type="entry name" value="GHMP Kinase, C-terminal domain"/>
    <property type="match status" value="1"/>
</dbReference>
<dbReference type="SUPFAM" id="SSF54211">
    <property type="entry name" value="Ribosomal protein S5 domain 2-like"/>
    <property type="match status" value="1"/>
</dbReference>
<reference key="1">
    <citation type="journal article" date="2003" name="Nature">
        <title>The genome sequence of Bacillus anthracis Ames and comparison to closely related bacteria.</title>
        <authorList>
            <person name="Read T.D."/>
            <person name="Peterson S.N."/>
            <person name="Tourasse N.J."/>
            <person name="Baillie L.W."/>
            <person name="Paulsen I.T."/>
            <person name="Nelson K.E."/>
            <person name="Tettelin H."/>
            <person name="Fouts D.E."/>
            <person name="Eisen J.A."/>
            <person name="Gill S.R."/>
            <person name="Holtzapple E.K."/>
            <person name="Okstad O.A."/>
            <person name="Helgason E."/>
            <person name="Rilstone J."/>
            <person name="Wu M."/>
            <person name="Kolonay J.F."/>
            <person name="Beanan M.J."/>
            <person name="Dodson R.J."/>
            <person name="Brinkac L.M."/>
            <person name="Gwinn M.L."/>
            <person name="DeBoy R.T."/>
            <person name="Madpu R."/>
            <person name="Daugherty S.C."/>
            <person name="Durkin A.S."/>
            <person name="Haft D.H."/>
            <person name="Nelson W.C."/>
            <person name="Peterson J.D."/>
            <person name="Pop M."/>
            <person name="Khouri H.M."/>
            <person name="Radune D."/>
            <person name="Benton J.L."/>
            <person name="Mahamoud Y."/>
            <person name="Jiang L."/>
            <person name="Hance I.R."/>
            <person name="Weidman J.F."/>
            <person name="Berry K.J."/>
            <person name="Plaut R.D."/>
            <person name="Wolf A.M."/>
            <person name="Watkins K.L."/>
            <person name="Nierman W.C."/>
            <person name="Hazen A."/>
            <person name="Cline R.T."/>
            <person name="Redmond C."/>
            <person name="Thwaite J.E."/>
            <person name="White O."/>
            <person name="Salzberg S.L."/>
            <person name="Thomason B."/>
            <person name="Friedlander A.M."/>
            <person name="Koehler T.M."/>
            <person name="Hanna P.C."/>
            <person name="Kolstoe A.-B."/>
            <person name="Fraser C.M."/>
        </authorList>
    </citation>
    <scope>NUCLEOTIDE SEQUENCE [LARGE SCALE GENOMIC DNA]</scope>
    <source>
        <strain>Ames / isolate Porton</strain>
    </source>
</reference>
<reference key="2">
    <citation type="journal article" date="2009" name="J. Bacteriol.">
        <title>The complete genome sequence of Bacillus anthracis Ames 'Ancestor'.</title>
        <authorList>
            <person name="Ravel J."/>
            <person name="Jiang L."/>
            <person name="Stanley S.T."/>
            <person name="Wilson M.R."/>
            <person name="Decker R.S."/>
            <person name="Read T.D."/>
            <person name="Worsham P."/>
            <person name="Keim P.S."/>
            <person name="Salzberg S.L."/>
            <person name="Fraser-Liggett C.M."/>
            <person name="Rasko D.A."/>
        </authorList>
    </citation>
    <scope>NUCLEOTIDE SEQUENCE [LARGE SCALE GENOMIC DNA]</scope>
    <source>
        <strain>Ames ancestor</strain>
    </source>
</reference>
<reference key="3">
    <citation type="submission" date="2004-01" db="EMBL/GenBank/DDBJ databases">
        <title>Complete genome sequence of Bacillus anthracis Sterne.</title>
        <authorList>
            <person name="Brettin T.S."/>
            <person name="Bruce D."/>
            <person name="Challacombe J.F."/>
            <person name="Gilna P."/>
            <person name="Han C."/>
            <person name="Hill K."/>
            <person name="Hitchcock P."/>
            <person name="Jackson P."/>
            <person name="Keim P."/>
            <person name="Longmire J."/>
            <person name="Lucas S."/>
            <person name="Okinaka R."/>
            <person name="Richardson P."/>
            <person name="Rubin E."/>
            <person name="Tice H."/>
        </authorList>
    </citation>
    <scope>NUCLEOTIDE SEQUENCE [LARGE SCALE GENOMIC DNA]</scope>
    <source>
        <strain>Sterne</strain>
    </source>
</reference>
<evidence type="ECO:0000255" key="1">
    <source>
        <dbReference type="HAMAP-Rule" id="MF_00061"/>
    </source>
</evidence>
<evidence type="ECO:0000305" key="2"/>
<protein>
    <recommendedName>
        <fullName evidence="1">4-diphosphocytidyl-2-C-methyl-D-erythritol kinase</fullName>
        <shortName evidence="1">CMK</shortName>
        <ecNumber evidence="1">2.7.1.148</ecNumber>
    </recommendedName>
    <alternativeName>
        <fullName evidence="1">4-(cytidine-5'-diphospho)-2-C-methyl-D-erythritol kinase</fullName>
    </alternativeName>
</protein>